<protein>
    <recommendedName>
        <fullName evidence="1">Glycogen synthase</fullName>
        <ecNumber evidence="1">2.4.1.21</ecNumber>
    </recommendedName>
    <alternativeName>
        <fullName evidence="1">Starch [bacterial glycogen] synthase</fullName>
    </alternativeName>
</protein>
<gene>
    <name evidence="1" type="primary">glgA</name>
    <name type="ordered locus">YE4010</name>
</gene>
<proteinExistence type="inferred from homology"/>
<feature type="chain" id="PRO_1000014392" description="Glycogen synthase">
    <location>
        <begin position="1"/>
        <end position="476"/>
    </location>
</feature>
<feature type="binding site" evidence="1">
    <location>
        <position position="15"/>
    </location>
    <ligand>
        <name>ADP-alpha-D-glucose</name>
        <dbReference type="ChEBI" id="CHEBI:57498"/>
    </ligand>
</feature>
<sequence length="476" mass="52255">MRVLHVCSELFPLLKTGGLADVVGALPAAQIAEGADVRVMLPGFPDLRRGIPDTVLVREIDTFAGRVSLRYGHYQGIGIYLIDAPGLYDRAGSPYHDQSLHAYADNYRRFALLGWMACELACGLDGYWRPEVVHAHDWHAGLACAYLAARGRPARSVFTVHNLAYQGLFSGHHLAEIQLPAAFFQMYGLEFYGQISYLKAGLFFADHVTTVSPTYAKEITQPAFGYGMEGLLQERASQGRLTGILNGVDSDIWDPQTDTLLHARYDAEDLQKKAVNKTHLQTTMGLEVTEKKPIFAVVSRLTEQKGLDLVLEALPDLLQLGGQLAVLGAGDAILQEAFLAAAADYSGQVGVQIGYHEAFSHRIIAGADVILVPSRFEPCGLTQLYGLKYGTLPLVRHTGGLADTVVDCALENLADGSASGFVFDECDAQALVRAIRRAFVLWSRPKHWRHVQRHAMGLDFGWQVAAADYLSLYRRL</sequence>
<reference key="1">
    <citation type="journal article" date="2006" name="PLoS Genet.">
        <title>The complete genome sequence and comparative genome analysis of the high pathogenicity Yersinia enterocolitica strain 8081.</title>
        <authorList>
            <person name="Thomson N.R."/>
            <person name="Howard S."/>
            <person name="Wren B.W."/>
            <person name="Holden M.T.G."/>
            <person name="Crossman L."/>
            <person name="Challis G.L."/>
            <person name="Churcher C."/>
            <person name="Mungall K."/>
            <person name="Brooks K."/>
            <person name="Chillingworth T."/>
            <person name="Feltwell T."/>
            <person name="Abdellah Z."/>
            <person name="Hauser H."/>
            <person name="Jagels K."/>
            <person name="Maddison M."/>
            <person name="Moule S."/>
            <person name="Sanders M."/>
            <person name="Whitehead S."/>
            <person name="Quail M.A."/>
            <person name="Dougan G."/>
            <person name="Parkhill J."/>
            <person name="Prentice M.B."/>
        </authorList>
    </citation>
    <scope>NUCLEOTIDE SEQUENCE [LARGE SCALE GENOMIC DNA]</scope>
    <source>
        <strain>NCTC 13174 / 8081</strain>
    </source>
</reference>
<accession>A1JSI5</accession>
<evidence type="ECO:0000255" key="1">
    <source>
        <dbReference type="HAMAP-Rule" id="MF_00484"/>
    </source>
</evidence>
<organism>
    <name type="scientific">Yersinia enterocolitica serotype O:8 / biotype 1B (strain NCTC 13174 / 8081)</name>
    <dbReference type="NCBI Taxonomy" id="393305"/>
    <lineage>
        <taxon>Bacteria</taxon>
        <taxon>Pseudomonadati</taxon>
        <taxon>Pseudomonadota</taxon>
        <taxon>Gammaproteobacteria</taxon>
        <taxon>Enterobacterales</taxon>
        <taxon>Yersiniaceae</taxon>
        <taxon>Yersinia</taxon>
    </lineage>
</organism>
<name>GLGA_YERE8</name>
<keyword id="KW-0320">Glycogen biosynthesis</keyword>
<keyword id="KW-0328">Glycosyltransferase</keyword>
<keyword id="KW-0808">Transferase</keyword>
<comment type="function">
    <text evidence="1">Synthesizes alpha-1,4-glucan chains using ADP-glucose.</text>
</comment>
<comment type="catalytic activity">
    <reaction evidence="1">
        <text>[(1-&gt;4)-alpha-D-glucosyl](n) + ADP-alpha-D-glucose = [(1-&gt;4)-alpha-D-glucosyl](n+1) + ADP + H(+)</text>
        <dbReference type="Rhea" id="RHEA:18189"/>
        <dbReference type="Rhea" id="RHEA-COMP:9584"/>
        <dbReference type="Rhea" id="RHEA-COMP:9587"/>
        <dbReference type="ChEBI" id="CHEBI:15378"/>
        <dbReference type="ChEBI" id="CHEBI:15444"/>
        <dbReference type="ChEBI" id="CHEBI:57498"/>
        <dbReference type="ChEBI" id="CHEBI:456216"/>
        <dbReference type="EC" id="2.4.1.21"/>
    </reaction>
</comment>
<comment type="pathway">
    <text evidence="1">Glycan biosynthesis; glycogen biosynthesis.</text>
</comment>
<comment type="similarity">
    <text evidence="1">Belongs to the glycosyltransferase 1 family. Bacterial/plant glycogen synthase subfamily.</text>
</comment>
<dbReference type="EC" id="2.4.1.21" evidence="1"/>
<dbReference type="EMBL" id="AM286415">
    <property type="protein sequence ID" value="CAL14028.1"/>
    <property type="molecule type" value="Genomic_DNA"/>
</dbReference>
<dbReference type="RefSeq" id="WP_011817363.1">
    <property type="nucleotide sequence ID" value="NC_008800.1"/>
</dbReference>
<dbReference type="RefSeq" id="YP_001008154.1">
    <property type="nucleotide sequence ID" value="NC_008800.1"/>
</dbReference>
<dbReference type="SMR" id="A1JSI5"/>
<dbReference type="CAZy" id="GT5">
    <property type="family name" value="Glycosyltransferase Family 5"/>
</dbReference>
<dbReference type="KEGG" id="yen:YE4010"/>
<dbReference type="PATRIC" id="fig|393305.7.peg.4269"/>
<dbReference type="eggNOG" id="COG0297">
    <property type="taxonomic scope" value="Bacteria"/>
</dbReference>
<dbReference type="HOGENOM" id="CLU_009583_18_2_6"/>
<dbReference type="OrthoDB" id="9808590at2"/>
<dbReference type="UniPathway" id="UPA00164"/>
<dbReference type="Proteomes" id="UP000000642">
    <property type="component" value="Chromosome"/>
</dbReference>
<dbReference type="GO" id="GO:0005829">
    <property type="term" value="C:cytosol"/>
    <property type="evidence" value="ECO:0007669"/>
    <property type="project" value="TreeGrafter"/>
</dbReference>
<dbReference type="GO" id="GO:0009011">
    <property type="term" value="F:alpha-1,4-glucan glucosyltransferase (ADP-glucose donor) activity"/>
    <property type="evidence" value="ECO:0007669"/>
    <property type="project" value="UniProtKB-UniRule"/>
</dbReference>
<dbReference type="GO" id="GO:0004373">
    <property type="term" value="F:alpha-1,4-glucan glucosyltransferase (UDP-glucose donor) activity"/>
    <property type="evidence" value="ECO:0007669"/>
    <property type="project" value="InterPro"/>
</dbReference>
<dbReference type="GO" id="GO:0005978">
    <property type="term" value="P:glycogen biosynthetic process"/>
    <property type="evidence" value="ECO:0007669"/>
    <property type="project" value="UniProtKB-UniRule"/>
</dbReference>
<dbReference type="CDD" id="cd03791">
    <property type="entry name" value="GT5_Glycogen_synthase_DULL1-like"/>
    <property type="match status" value="1"/>
</dbReference>
<dbReference type="FunFam" id="3.40.50.2000:FF:000011">
    <property type="entry name" value="Glycogen synthase"/>
    <property type="match status" value="1"/>
</dbReference>
<dbReference type="Gene3D" id="3.40.50.2000">
    <property type="entry name" value="Glycogen Phosphorylase B"/>
    <property type="match status" value="2"/>
</dbReference>
<dbReference type="HAMAP" id="MF_00484">
    <property type="entry name" value="Glycogen_synth"/>
    <property type="match status" value="1"/>
</dbReference>
<dbReference type="InterPro" id="IPR001296">
    <property type="entry name" value="Glyco_trans_1"/>
</dbReference>
<dbReference type="InterPro" id="IPR011835">
    <property type="entry name" value="GS/SS"/>
</dbReference>
<dbReference type="InterPro" id="IPR013534">
    <property type="entry name" value="Starch_synth_cat_dom"/>
</dbReference>
<dbReference type="NCBIfam" id="TIGR02095">
    <property type="entry name" value="glgA"/>
    <property type="match status" value="1"/>
</dbReference>
<dbReference type="NCBIfam" id="NF001899">
    <property type="entry name" value="PRK00654.1-2"/>
    <property type="match status" value="1"/>
</dbReference>
<dbReference type="PANTHER" id="PTHR45825:SF11">
    <property type="entry name" value="ALPHA AMYLASE DOMAIN-CONTAINING PROTEIN"/>
    <property type="match status" value="1"/>
</dbReference>
<dbReference type="PANTHER" id="PTHR45825">
    <property type="entry name" value="GRANULE-BOUND STARCH SYNTHASE 1, CHLOROPLASTIC/AMYLOPLASTIC"/>
    <property type="match status" value="1"/>
</dbReference>
<dbReference type="Pfam" id="PF08323">
    <property type="entry name" value="Glyco_transf_5"/>
    <property type="match status" value="1"/>
</dbReference>
<dbReference type="Pfam" id="PF00534">
    <property type="entry name" value="Glycos_transf_1"/>
    <property type="match status" value="1"/>
</dbReference>
<dbReference type="SUPFAM" id="SSF53756">
    <property type="entry name" value="UDP-Glycosyltransferase/glycogen phosphorylase"/>
    <property type="match status" value="1"/>
</dbReference>